<keyword id="KW-0325">Glycoprotein</keyword>
<keyword id="KW-0458">Lysosome</keyword>
<keyword id="KW-0472">Membrane</keyword>
<keyword id="KW-1185">Reference proteome</keyword>
<keyword id="KW-0732">Signal</keyword>
<keyword id="KW-0769">Symport</keyword>
<keyword id="KW-0812">Transmembrane</keyword>
<keyword id="KW-1133">Transmembrane helix</keyword>
<keyword id="KW-0813">Transport</keyword>
<accession>A5D7V7</accession>
<comment type="function">
    <text evidence="1 2">Lysosomal proton-coupled steroid conjugate and bile acid transporter. Preferentially recognizes lipophilic steroid conjugates or bile acis as endogenous substrates and seems to mediate escape from lysosomes to the cytoplasm (By similarity). Modulates hepatic cytosolic copper homeostasis, maybe acting as a lysosomal copper transporter and sequestering copper ions in the lysosome (By similarity). Delivers pathogen-associated molecular patterns to cytosolic pattern recognition receptors as part of the innate immune response to microbes. Selectively transports bacterial muramyl dipeptide (MDP) into the cytosol for recognition by NOD2, triggering inflammatory responses (By similarity). Likely acts as a redundant importer of cyclic GMP-AMP dinucleotides (cGAMPs) in monocyte and macrophage cell lineages. The transport mechanism, its electrogenicity and stoichiometry remain to be elucidated (By similarity).</text>
</comment>
<comment type="catalytic activity">
    <reaction evidence="1">
        <text>estrone 3-sulfate(out) + n H(+)(out) = estrone 3-sulfate(in) + n H(+)(in)</text>
        <dbReference type="Rhea" id="RHEA:75483"/>
        <dbReference type="ChEBI" id="CHEBI:15378"/>
        <dbReference type="ChEBI" id="CHEBI:60050"/>
    </reaction>
</comment>
<comment type="catalytic activity">
    <reaction evidence="1">
        <text>25-hydroxyvitamin D3 sulfate(out) + n H(+)(out) = 25-hydroxyvitamin D3 sulfate(in) + n H(+)(in)</text>
        <dbReference type="Rhea" id="RHEA:75491"/>
        <dbReference type="ChEBI" id="CHEBI:15378"/>
        <dbReference type="ChEBI" id="CHEBI:194336"/>
    </reaction>
</comment>
<comment type="catalytic activity">
    <reaction evidence="1">
        <text>cholate(out) + n H(+)(out) = cholate(in) + n H(+)(in)</text>
        <dbReference type="Rhea" id="RHEA:75499"/>
        <dbReference type="ChEBI" id="CHEBI:15378"/>
        <dbReference type="ChEBI" id="CHEBI:29747"/>
    </reaction>
</comment>
<comment type="catalytic activity">
    <reaction evidence="1">
        <text>glycocholate(out) + n H(+)(out) = glycocholate(in) + n H(+)(in)</text>
        <dbReference type="Rhea" id="RHEA:75503"/>
        <dbReference type="ChEBI" id="CHEBI:15378"/>
        <dbReference type="ChEBI" id="CHEBI:29746"/>
    </reaction>
</comment>
<comment type="catalytic activity">
    <reaction evidence="1">
        <text>taurocholate(out) + n H(+)(out) = taurocholate(in) + n H(+)(in)</text>
        <dbReference type="Rhea" id="RHEA:75507"/>
        <dbReference type="ChEBI" id="CHEBI:15378"/>
        <dbReference type="ChEBI" id="CHEBI:36257"/>
    </reaction>
</comment>
<comment type="catalytic activity">
    <reaction evidence="1">
        <text>dehydroepiandrosterone 3-sulfate(out) + n H(+)(out) = dehydroepiandrosterone 3-sulfate(in) + n H(+)(in)</text>
        <dbReference type="Rhea" id="RHEA:75487"/>
        <dbReference type="ChEBI" id="CHEBI:15378"/>
        <dbReference type="ChEBI" id="CHEBI:57905"/>
    </reaction>
</comment>
<comment type="catalytic activity">
    <reaction evidence="2">
        <text>N-acetyl-D-muramoyl-L-alanyl-D-isoglutamine(out) + n H(+)(out) = N-acetyl-D-muramoyl-L-alanyl-D-isoglutamine(in) + n H(+)(in)</text>
        <dbReference type="Rhea" id="RHEA:76371"/>
        <dbReference type="ChEBI" id="CHEBI:15378"/>
        <dbReference type="ChEBI" id="CHEBI:155830"/>
    </reaction>
    <physiologicalReaction direction="left-to-right" evidence="2">
        <dbReference type="Rhea" id="RHEA:76372"/>
    </physiologicalReaction>
</comment>
<comment type="catalytic activity">
    <reaction evidence="1">
        <text>2',3'-cGAMP(out) + n H(+)(out) = 2',3'-cGAMP(in) + n H(+)(in)</text>
        <dbReference type="Rhea" id="RHEA:76411"/>
        <dbReference type="ChEBI" id="CHEBI:15378"/>
        <dbReference type="ChEBI" id="CHEBI:143093"/>
    </reaction>
    <physiologicalReaction direction="left-to-right" evidence="1">
        <dbReference type="Rhea" id="RHEA:76412"/>
    </physiologicalReaction>
</comment>
<comment type="subcellular location">
    <subcellularLocation>
        <location evidence="1">Lysosome membrane</location>
        <topology evidence="3">Multi-pass membrane protein</topology>
    </subcellularLocation>
</comment>
<comment type="similarity">
    <text evidence="4">Belongs to the major facilitator superfamily. SLC46A family.</text>
</comment>
<name>S46A3_BOVIN</name>
<sequence>MKIPFVEPVICLSVFAVTLNSPLTTQYVYRRIWEETGNYSIALESNTSECAKNKSSPIFAFQEEVQKKVSLFNLEMDISGLIPGLVSTFVFLSHSDHGGRKFPLILSSVGALANSAWLCLLSYFALPIQLLIASTFIGALFGNYTTFLGASFAYIVDQCKEKKQRTIRIAIIDFLFGVVSGLTGLSSGYFIRGLGFVWSFLIVTVALFVNLIYILLFLEDSMKESSSQNISVSWTETFKNLFHRTYMLFKNASGEQQSLCCLLLFTMITYFFVTIGVSPIFVLYELDSPLCWDEVLIGYGSALGSVTFFSSFLGIWLFSYCMEDIHMAFIGTFTTMVGMAMTAFARTTLMMFLVRLPFLFTVMPLSVLRSMISKVVHSTEQGTMFACLAFLETLGGITAVSTFNGIYSATVAWCKGFVFLLSAVLLLIPAISLCVIKYVSRNTGSYVLLIQEESSEDTSDR</sequence>
<protein>
    <recommendedName>
        <fullName>Lysosomal proton-coupled steroid conjugate and bile acid symporter SLC46A3</fullName>
    </recommendedName>
    <alternativeName>
        <fullName>Solute carrier family 46 member 3</fullName>
    </alternativeName>
</protein>
<proteinExistence type="evidence at transcript level"/>
<reference key="1">
    <citation type="submission" date="2007-04" db="EMBL/GenBank/DDBJ databases">
        <authorList>
            <consortium name="NIH - Mammalian Gene Collection (MGC) project"/>
        </authorList>
    </citation>
    <scope>NUCLEOTIDE SEQUENCE [LARGE SCALE MRNA]</scope>
    <source>
        <strain>Hereford</strain>
        <tissue>Thymus</tissue>
    </source>
</reference>
<dbReference type="EMBL" id="BC140697">
    <property type="protein sequence ID" value="AAI40698.1"/>
    <property type="molecule type" value="mRNA"/>
</dbReference>
<dbReference type="RefSeq" id="NP_001096773.1">
    <property type="nucleotide sequence ID" value="NM_001103303.2"/>
</dbReference>
<dbReference type="SMR" id="A5D7V7"/>
<dbReference type="FunCoup" id="A5D7V7">
    <property type="interactions" value="270"/>
</dbReference>
<dbReference type="GlyCosmos" id="A5D7V7">
    <property type="glycosylation" value="3 sites, No reported glycans"/>
</dbReference>
<dbReference type="GlyGen" id="A5D7V7">
    <property type="glycosylation" value="3 sites"/>
</dbReference>
<dbReference type="PaxDb" id="9913-ENSBTAP00000011448"/>
<dbReference type="GeneID" id="781117"/>
<dbReference type="KEGG" id="bta:781117"/>
<dbReference type="CTD" id="283537"/>
<dbReference type="eggNOG" id="KOG2816">
    <property type="taxonomic scope" value="Eukaryota"/>
</dbReference>
<dbReference type="InParanoid" id="A5D7V7"/>
<dbReference type="OrthoDB" id="3026777at2759"/>
<dbReference type="Proteomes" id="UP000009136">
    <property type="component" value="Unplaced"/>
</dbReference>
<dbReference type="GO" id="GO:0005765">
    <property type="term" value="C:lysosomal membrane"/>
    <property type="evidence" value="ECO:0000318"/>
    <property type="project" value="GO_Central"/>
</dbReference>
<dbReference type="GO" id="GO:0015293">
    <property type="term" value="F:symporter activity"/>
    <property type="evidence" value="ECO:0007669"/>
    <property type="project" value="UniProtKB-KW"/>
</dbReference>
<dbReference type="GO" id="GO:0022857">
    <property type="term" value="F:transmembrane transporter activity"/>
    <property type="evidence" value="ECO:0000318"/>
    <property type="project" value="GO_Central"/>
</dbReference>
<dbReference type="GO" id="GO:0034486">
    <property type="term" value="P:vacuolar transmembrane transport"/>
    <property type="evidence" value="ECO:0000318"/>
    <property type="project" value="GO_Central"/>
</dbReference>
<dbReference type="Gene3D" id="1.20.1250.20">
    <property type="entry name" value="MFS general substrate transporter like domains"/>
    <property type="match status" value="1"/>
</dbReference>
<dbReference type="InterPro" id="IPR011701">
    <property type="entry name" value="MFS"/>
</dbReference>
<dbReference type="InterPro" id="IPR036259">
    <property type="entry name" value="MFS_trans_sf"/>
</dbReference>
<dbReference type="PANTHER" id="PTHR23507:SF9">
    <property type="entry name" value="LYSOSOMAL PROTON-COUPLED STEROID CONJUGATE AND BILE ACID SYMPORTER SLC46A3"/>
    <property type="match status" value="1"/>
</dbReference>
<dbReference type="PANTHER" id="PTHR23507">
    <property type="entry name" value="ZGC:174356"/>
    <property type="match status" value="1"/>
</dbReference>
<dbReference type="Pfam" id="PF07690">
    <property type="entry name" value="MFS_1"/>
    <property type="match status" value="1"/>
</dbReference>
<dbReference type="SUPFAM" id="SSF103473">
    <property type="entry name" value="MFS general substrate transporter"/>
    <property type="match status" value="1"/>
</dbReference>
<gene>
    <name type="primary">SLC46A3</name>
</gene>
<evidence type="ECO:0000250" key="1">
    <source>
        <dbReference type="UniProtKB" id="Q7Z3Q1"/>
    </source>
</evidence>
<evidence type="ECO:0000250" key="2">
    <source>
        <dbReference type="UniProtKB" id="Q9DC26"/>
    </source>
</evidence>
<evidence type="ECO:0000255" key="3"/>
<evidence type="ECO:0000305" key="4"/>
<organism>
    <name type="scientific">Bos taurus</name>
    <name type="common">Bovine</name>
    <dbReference type="NCBI Taxonomy" id="9913"/>
    <lineage>
        <taxon>Eukaryota</taxon>
        <taxon>Metazoa</taxon>
        <taxon>Chordata</taxon>
        <taxon>Craniata</taxon>
        <taxon>Vertebrata</taxon>
        <taxon>Euteleostomi</taxon>
        <taxon>Mammalia</taxon>
        <taxon>Eutheria</taxon>
        <taxon>Laurasiatheria</taxon>
        <taxon>Artiodactyla</taxon>
        <taxon>Ruminantia</taxon>
        <taxon>Pecora</taxon>
        <taxon>Bovidae</taxon>
        <taxon>Bovinae</taxon>
        <taxon>Bos</taxon>
    </lineage>
</organism>
<feature type="signal peptide" evidence="3">
    <location>
        <begin position="1"/>
        <end position="25"/>
    </location>
</feature>
<feature type="chain" id="PRO_0000307252" description="Lysosomal proton-coupled steroid conjugate and bile acid symporter SLC46A3">
    <location>
        <begin position="26"/>
        <end position="461"/>
    </location>
</feature>
<feature type="topological domain" description="Extracellular" evidence="3">
    <location>
        <begin position="26"/>
        <end position="70"/>
    </location>
</feature>
<feature type="transmembrane region" description="Helical" evidence="3">
    <location>
        <begin position="71"/>
        <end position="91"/>
    </location>
</feature>
<feature type="topological domain" description="Cytoplasmic" evidence="3">
    <location>
        <begin position="92"/>
        <end position="101"/>
    </location>
</feature>
<feature type="transmembrane region" description="Helical" evidence="3">
    <location>
        <begin position="102"/>
        <end position="124"/>
    </location>
</feature>
<feature type="topological domain" description="Extracellular" evidence="3">
    <location>
        <begin position="125"/>
        <end position="133"/>
    </location>
</feature>
<feature type="transmembrane region" description="Helical" evidence="3">
    <location>
        <begin position="134"/>
        <end position="156"/>
    </location>
</feature>
<feature type="topological domain" description="Cytoplasmic" evidence="3">
    <location>
        <begin position="157"/>
        <end position="170"/>
    </location>
</feature>
<feature type="transmembrane region" description="Helical" evidence="3">
    <location>
        <begin position="171"/>
        <end position="191"/>
    </location>
</feature>
<feature type="topological domain" description="Extracellular" evidence="3">
    <location>
        <begin position="192"/>
        <end position="195"/>
    </location>
</feature>
<feature type="transmembrane region" description="Helical" evidence="3">
    <location>
        <begin position="196"/>
        <end position="216"/>
    </location>
</feature>
<feature type="topological domain" description="Cytoplasmic" evidence="3">
    <location>
        <begin position="217"/>
        <end position="261"/>
    </location>
</feature>
<feature type="transmembrane region" description="Helical" evidence="3">
    <location>
        <begin position="262"/>
        <end position="282"/>
    </location>
</feature>
<feature type="topological domain" description="Extracellular" evidence="3">
    <location>
        <begin position="283"/>
        <end position="294"/>
    </location>
</feature>
<feature type="transmembrane region" description="Helical" evidence="3">
    <location>
        <begin position="295"/>
        <end position="315"/>
    </location>
</feature>
<feature type="topological domain" description="Cytoplasmic" evidence="3">
    <location>
        <begin position="316"/>
        <end position="324"/>
    </location>
</feature>
<feature type="transmembrane region" description="Helical" evidence="3">
    <location>
        <begin position="325"/>
        <end position="345"/>
    </location>
</feature>
<feature type="topological domain" description="Extracellular" evidence="3">
    <location>
        <begin position="346"/>
        <end position="347"/>
    </location>
</feature>
<feature type="transmembrane region" description="Helical" evidence="3">
    <location>
        <begin position="348"/>
        <end position="368"/>
    </location>
</feature>
<feature type="topological domain" description="Cytoplasmic" evidence="3">
    <location>
        <begin position="369"/>
        <end position="382"/>
    </location>
</feature>
<feature type="transmembrane region" description="Helical" evidence="3">
    <location>
        <begin position="383"/>
        <end position="403"/>
    </location>
</feature>
<feature type="topological domain" description="Extracellular" evidence="3">
    <location>
        <begin position="404"/>
        <end position="415"/>
    </location>
</feature>
<feature type="transmembrane region" description="Helical" evidence="3">
    <location>
        <begin position="416"/>
        <end position="436"/>
    </location>
</feature>
<feature type="topological domain" description="Cytoplasmic" evidence="3">
    <location>
        <begin position="437"/>
        <end position="461"/>
    </location>
</feature>
<feature type="short sequence motif" description="Tyrosine-based lysosomal-sorting motif" evidence="1">
    <location>
        <begin position="446"/>
        <end position="449"/>
    </location>
</feature>
<feature type="glycosylation site" description="N-linked (GlcNAc...) asparagine" evidence="3">
    <location>
        <position position="38"/>
    </location>
</feature>
<feature type="glycosylation site" description="N-linked (GlcNAc...) asparagine" evidence="3">
    <location>
        <position position="46"/>
    </location>
</feature>
<feature type="glycosylation site" description="N-linked (GlcNAc...) asparagine" evidence="3">
    <location>
        <position position="53"/>
    </location>
</feature>